<dbReference type="EMBL" id="DP001034">
    <property type="protein sequence ID" value="ACJ74009.1"/>
    <property type="molecule type" value="Genomic_DNA"/>
</dbReference>
<dbReference type="RefSeq" id="NP_001164767.1">
    <property type="nucleotide sequence ID" value="NM_001171296.1"/>
</dbReference>
<dbReference type="RefSeq" id="XP_008262236.1">
    <property type="nucleotide sequence ID" value="XM_008264014.4"/>
</dbReference>
<dbReference type="RefSeq" id="XP_008262237.1">
    <property type="nucleotide sequence ID" value="XM_008264015.4"/>
</dbReference>
<dbReference type="RefSeq" id="XP_017200998.1">
    <property type="nucleotide sequence ID" value="XM_017345509.3"/>
</dbReference>
<dbReference type="RefSeq" id="XP_069932792.1">
    <property type="nucleotide sequence ID" value="XM_070076691.1"/>
</dbReference>
<dbReference type="SMR" id="B7NZC7"/>
<dbReference type="FunCoup" id="B7NZC7">
    <property type="interactions" value="185"/>
</dbReference>
<dbReference type="STRING" id="9986.ENSOCUP00000004072"/>
<dbReference type="PaxDb" id="9986-ENSOCUP00000004072"/>
<dbReference type="Ensembl" id="ENSOCUT00000004713.1">
    <property type="protein sequence ID" value="ENSOCUP00000004072.1"/>
    <property type="gene ID" value="ENSOCUG00000004719.1"/>
</dbReference>
<dbReference type="GeneID" id="100328663"/>
<dbReference type="KEGG" id="ocu:100328663"/>
<dbReference type="CTD" id="79626"/>
<dbReference type="eggNOG" id="ENOG502QST4">
    <property type="taxonomic scope" value="Eukaryota"/>
</dbReference>
<dbReference type="GeneTree" id="ENSGT00390000003488"/>
<dbReference type="HOGENOM" id="CLU_085918_1_0_1"/>
<dbReference type="InParanoid" id="B7NZC7"/>
<dbReference type="OMA" id="IRRVFDH"/>
<dbReference type="OrthoDB" id="10055976at2759"/>
<dbReference type="TreeFam" id="TF323415"/>
<dbReference type="Proteomes" id="UP000001811">
    <property type="component" value="Chromosome 13"/>
</dbReference>
<dbReference type="Bgee" id="ENSOCUG00000004719">
    <property type="expression patterns" value="Expressed in blood and 19 other cell types or tissues"/>
</dbReference>
<dbReference type="GO" id="GO:0005764">
    <property type="term" value="C:lysosome"/>
    <property type="evidence" value="ECO:0007669"/>
    <property type="project" value="UniProtKB-SubCell"/>
</dbReference>
<dbReference type="GO" id="GO:0005634">
    <property type="term" value="C:nucleus"/>
    <property type="evidence" value="ECO:0007669"/>
    <property type="project" value="UniProtKB-SubCell"/>
</dbReference>
<dbReference type="GO" id="GO:0045087">
    <property type="term" value="P:innate immune response"/>
    <property type="evidence" value="ECO:0007669"/>
    <property type="project" value="UniProtKB-KW"/>
</dbReference>
<dbReference type="GO" id="GO:0050728">
    <property type="term" value="P:negative regulation of inflammatory response"/>
    <property type="evidence" value="ECO:0007669"/>
    <property type="project" value="Ensembl"/>
</dbReference>
<dbReference type="GO" id="GO:0050868">
    <property type="term" value="P:negative regulation of T cell activation"/>
    <property type="evidence" value="ECO:0007669"/>
    <property type="project" value="Ensembl"/>
</dbReference>
<dbReference type="GO" id="GO:0042981">
    <property type="term" value="P:regulation of apoptotic process"/>
    <property type="evidence" value="ECO:0007669"/>
    <property type="project" value="InterPro"/>
</dbReference>
<dbReference type="GO" id="GO:0042110">
    <property type="term" value="P:T cell activation"/>
    <property type="evidence" value="ECO:0007669"/>
    <property type="project" value="Ensembl"/>
</dbReference>
<dbReference type="FunFam" id="1.20.1440.160:FF:000001">
    <property type="entry name" value="Tumor necrosis factor alpha-induced protein 8-like 1"/>
    <property type="match status" value="1"/>
</dbReference>
<dbReference type="Gene3D" id="1.20.1440.160">
    <property type="entry name" value="Tumor necrosis factor alpha-induced protein 8-like"/>
    <property type="match status" value="1"/>
</dbReference>
<dbReference type="InterPro" id="IPR008477">
    <property type="entry name" value="TNFAIP8-like"/>
</dbReference>
<dbReference type="InterPro" id="IPR038355">
    <property type="entry name" value="TNFAIP8_sf"/>
</dbReference>
<dbReference type="PANTHER" id="PTHR12757:SF4">
    <property type="entry name" value="TUMOR NECROSIS FACTOR ALPHA-INDUCED PROTEIN 8-LIKE PROTEIN 2"/>
    <property type="match status" value="1"/>
</dbReference>
<dbReference type="PANTHER" id="PTHR12757">
    <property type="entry name" value="TUMOR NECROSIS FACTOR INDUCED PROTEIN"/>
    <property type="match status" value="1"/>
</dbReference>
<dbReference type="Pfam" id="PF05527">
    <property type="entry name" value="DUF758"/>
    <property type="match status" value="1"/>
</dbReference>
<accession>B7NZC7</accession>
<comment type="function">
    <text evidence="2 3">Acts as a negative regulator of innate and adaptive immunity by maintaining immune homeostasis. Plays a regulatory role in the Toll-like signaling pathway by determining the strength of LPS-induced signaling and gene expression (By similarity). Inhibits TCR-mediated T-cell activation and negatively regulate T-cell function to prevent hyperresponsiveness (By similarity). Also inhibits autolysosome formation via negatively modulating MTOR activation by interacting with RAC1 and promoting the disassociation of the RAC1-MTOR complex (By similarity). Plays an essential role in NK-cell biology by acting as a checkpoint and displaying an expression pattern correlating with NK-cell maturation process and by negatively regulating NK-cell maturation and antitumor immunity (By similarity). Mechanistically, suppresses IL-15-triggered mTOR activity in NK-cells (By similarity).</text>
</comment>
<comment type="subunit">
    <text evidence="2">May interact with CASP8; however, such result is unclear since could not reproduce the interaction with CASP8. Interacts with RAC1.</text>
</comment>
<comment type="subcellular location">
    <subcellularLocation>
        <location evidence="2">Cytoplasm</location>
    </subcellularLocation>
    <subcellularLocation>
        <location evidence="2">Nucleus</location>
    </subcellularLocation>
    <subcellularLocation>
        <location evidence="2">Lysosome</location>
    </subcellularLocation>
</comment>
<comment type="domain">
    <text evidence="1">The central region was initially thought to constitute a DED (death effector) domain. However, 3D-structure data reveal a previously uncharacterized fold that is different from the predicted fold of a DED (death effector) domain. It consists of a large, hydrophobic central cavity that is poised for cofactor binding (By similarity).</text>
</comment>
<comment type="PTM">
    <text evidence="2">Phosphorylated by TAK1/MAP3K7; this phosphorylation triggers association with BTRC and subsequent ubiquitination and degradation.</text>
</comment>
<comment type="PTM">
    <text evidence="2">Ubiquitinated in a BTRC-depdent manner; leading to degradation mediated through the proteasome pathway.</text>
</comment>
<comment type="similarity">
    <text evidence="4">Belongs to the TNFAIP8 family. TNFAIP8L2 subfamily.</text>
</comment>
<reference key="1">
    <citation type="submission" date="2008-12" db="EMBL/GenBank/DDBJ databases">
        <title>NISC comparative sequencing initiative.</title>
        <authorList>
            <person name="Antonellis A."/>
            <person name="Ayele K."/>
            <person name="Benjamin B."/>
            <person name="Blakesley R.W."/>
            <person name="Boakye A."/>
            <person name="Bouffard G.G."/>
            <person name="Brinkley C."/>
            <person name="Brooks S."/>
            <person name="Chu G."/>
            <person name="Coleman H."/>
            <person name="Engle J."/>
            <person name="Gestole M."/>
            <person name="Greene A."/>
            <person name="Guan X."/>
            <person name="Gupta J."/>
            <person name="Haghighi P."/>
            <person name="Han J."/>
            <person name="Hansen N."/>
            <person name="Ho S.-L."/>
            <person name="Hu P."/>
            <person name="Hunter G."/>
            <person name="Hurle B."/>
            <person name="Idol J.R."/>
            <person name="Kwong P."/>
            <person name="Laric P."/>
            <person name="Larson S."/>
            <person name="Lee-Lin S.-Q."/>
            <person name="Legaspi R."/>
            <person name="Madden M."/>
            <person name="Maduro Q.L."/>
            <person name="Maduro V.B."/>
            <person name="Margulies E.H."/>
            <person name="Masiello C."/>
            <person name="Maskeri B."/>
            <person name="McDowell J."/>
            <person name="Mojidi H.A."/>
            <person name="Mullikin J.C."/>
            <person name="Oestreicher J.S."/>
            <person name="Park M."/>
            <person name="Portnoy M.E."/>
            <person name="Prasad A."/>
            <person name="Puri O."/>
            <person name="Reddix-Dugue N."/>
            <person name="Schandler K."/>
            <person name="Schueler M.G."/>
            <person name="Sison C."/>
            <person name="Stantripop S."/>
            <person name="Stephen E."/>
            <person name="Taye A."/>
            <person name="Thomas J.W."/>
            <person name="Thomas P.J."/>
            <person name="Tsipouri V."/>
            <person name="Ung L."/>
            <person name="Vogt J.L."/>
            <person name="Wetherby K.D."/>
            <person name="Young A."/>
            <person name="Green E.D."/>
        </authorList>
    </citation>
    <scope>NUCLEOTIDE SEQUENCE [LARGE SCALE GENOMIC DNA]</scope>
</reference>
<organism>
    <name type="scientific">Oryctolagus cuniculus</name>
    <name type="common">Rabbit</name>
    <dbReference type="NCBI Taxonomy" id="9986"/>
    <lineage>
        <taxon>Eukaryota</taxon>
        <taxon>Metazoa</taxon>
        <taxon>Chordata</taxon>
        <taxon>Craniata</taxon>
        <taxon>Vertebrata</taxon>
        <taxon>Euteleostomi</taxon>
        <taxon>Mammalia</taxon>
        <taxon>Eutheria</taxon>
        <taxon>Euarchontoglires</taxon>
        <taxon>Glires</taxon>
        <taxon>Lagomorpha</taxon>
        <taxon>Leporidae</taxon>
        <taxon>Oryctolagus</taxon>
    </lineage>
</organism>
<proteinExistence type="inferred from homology"/>
<feature type="chain" id="PRO_0000369395" description="Tumor necrosis factor alpha-induced protein 8-like protein 2">
    <location>
        <begin position="1"/>
        <end position="184"/>
    </location>
</feature>
<feature type="modified residue" description="Phosphoserine" evidence="2">
    <location>
        <position position="3"/>
    </location>
</feature>
<protein>
    <recommendedName>
        <fullName>Tumor necrosis factor alpha-induced protein 8-like protein 2</fullName>
        <shortName>TIPE2</shortName>
        <shortName>TNF alpha-induced protein 8-like protein 2</shortName>
        <shortName>TNFAIP8-like protein 2</shortName>
    </recommendedName>
</protein>
<sequence>MESFSSKSLALQAEKKLLSKMVGRSAAHLFIDETSSEVLDELYRVSKEYTHSRPQAQRVIKDLIKVAVKVAVLHRSGCFGPSELALATRFRQKLRQGAMTALSFGEVDFTFEAAVLAGLLTECRDVLLELVENHLTPKSHGRIRHVFDHFSDPGLLTALYGPDFTQHLGKICDGLRKLLEEGKL</sequence>
<keyword id="KW-0963">Cytoplasm</keyword>
<keyword id="KW-0391">Immunity</keyword>
<keyword id="KW-0399">Innate immunity</keyword>
<keyword id="KW-0458">Lysosome</keyword>
<keyword id="KW-0539">Nucleus</keyword>
<keyword id="KW-0597">Phosphoprotein</keyword>
<keyword id="KW-1185">Reference proteome</keyword>
<keyword id="KW-0832">Ubl conjugation</keyword>
<gene>
    <name type="primary">TNFAIP8L2</name>
</gene>
<evidence type="ECO:0000250" key="1"/>
<evidence type="ECO:0000250" key="2">
    <source>
        <dbReference type="UniProtKB" id="Q6P589"/>
    </source>
</evidence>
<evidence type="ECO:0000250" key="3">
    <source>
        <dbReference type="UniProtKB" id="Q9D8Y7"/>
    </source>
</evidence>
<evidence type="ECO:0000305" key="4"/>
<name>TP8L2_RABIT</name>